<gene>
    <name type="primary">Slc22a21</name>
    <name type="synonym">Octn3</name>
    <name type="synonym">Slc22a9</name>
</gene>
<dbReference type="EMBL" id="AB018436">
    <property type="protein sequence ID" value="BAA78343.1"/>
    <property type="molecule type" value="mRNA"/>
</dbReference>
<dbReference type="EMBL" id="AK133431">
    <property type="protein sequence ID" value="BAE21654.1"/>
    <property type="molecule type" value="mRNA"/>
</dbReference>
<dbReference type="EMBL" id="AK161508">
    <property type="protein sequence ID" value="BAE36432.1"/>
    <property type="molecule type" value="mRNA"/>
</dbReference>
<dbReference type="EMBL" id="AL596444">
    <property type="status" value="NOT_ANNOTATED_CDS"/>
    <property type="molecule type" value="Genomic_DNA"/>
</dbReference>
<dbReference type="CCDS" id="CCDS24688.1"/>
<dbReference type="RefSeq" id="NP_062697.1">
    <property type="nucleotide sequence ID" value="NM_019723.3"/>
</dbReference>
<dbReference type="SMR" id="Q9WTN6"/>
<dbReference type="BioGRID" id="208030">
    <property type="interactions" value="23"/>
</dbReference>
<dbReference type="FunCoup" id="Q9WTN6">
    <property type="interactions" value="92"/>
</dbReference>
<dbReference type="IntAct" id="Q9WTN6">
    <property type="interactions" value="1"/>
</dbReference>
<dbReference type="STRING" id="10090.ENSMUSP00000075814"/>
<dbReference type="ChEMBL" id="CHEMBL2073715"/>
<dbReference type="DrugBank" id="DB08842">
    <property type="generic name" value="Acetylcarnitine"/>
</dbReference>
<dbReference type="TCDB" id="2.A.1.19.41">
    <property type="family name" value="the major facilitator superfamily (mfs)"/>
</dbReference>
<dbReference type="GlyCosmos" id="Q9WTN6">
    <property type="glycosylation" value="3 sites, No reported glycans"/>
</dbReference>
<dbReference type="GlyGen" id="Q9WTN6">
    <property type="glycosylation" value="5 sites, 1 O-linked glycan (2 sites)"/>
</dbReference>
<dbReference type="iPTMnet" id="Q9WTN6"/>
<dbReference type="PhosphoSitePlus" id="Q9WTN6"/>
<dbReference type="SwissPalm" id="Q9WTN6"/>
<dbReference type="jPOST" id="Q9WTN6"/>
<dbReference type="PaxDb" id="10090-ENSMUSP00000075814"/>
<dbReference type="ProteomicsDB" id="260762"/>
<dbReference type="DNASU" id="56517"/>
<dbReference type="Ensembl" id="ENSMUST00000076493.11">
    <property type="protein sequence ID" value="ENSMUSP00000075814.5"/>
    <property type="gene ID" value="ENSMUSG00000063652.11"/>
</dbReference>
<dbReference type="GeneID" id="56517"/>
<dbReference type="KEGG" id="mmu:56517"/>
<dbReference type="UCSC" id="uc007ixd.1">
    <property type="organism name" value="mouse"/>
</dbReference>
<dbReference type="AGR" id="MGI:1929481"/>
<dbReference type="CTD" id="56517"/>
<dbReference type="MGI" id="MGI:1929481">
    <property type="gene designation" value="Slc22a21"/>
</dbReference>
<dbReference type="VEuPathDB" id="HostDB:ENSMUSG00000063652"/>
<dbReference type="eggNOG" id="KOG0255">
    <property type="taxonomic scope" value="Eukaryota"/>
</dbReference>
<dbReference type="GeneTree" id="ENSGT00940000154155"/>
<dbReference type="HOGENOM" id="CLU_001265_33_4_1"/>
<dbReference type="InParanoid" id="Q9WTN6"/>
<dbReference type="OMA" id="IWVACAC"/>
<dbReference type="OrthoDB" id="3936150at2759"/>
<dbReference type="PhylomeDB" id="Q9WTN6"/>
<dbReference type="TreeFam" id="TF315847"/>
<dbReference type="BioGRID-ORCS" id="56517">
    <property type="hits" value="2 hits in 78 CRISPR screens"/>
</dbReference>
<dbReference type="PRO" id="PR:Q9WTN6"/>
<dbReference type="Proteomes" id="UP000000589">
    <property type="component" value="Chromosome 11"/>
</dbReference>
<dbReference type="RNAct" id="Q9WTN6">
    <property type="molecule type" value="protein"/>
</dbReference>
<dbReference type="Bgee" id="ENSMUSG00000063652">
    <property type="expression patterns" value="Expressed in spermatocyte and 129 other cell types or tissues"/>
</dbReference>
<dbReference type="ExpressionAtlas" id="Q9WTN6">
    <property type="expression patterns" value="baseline and differential"/>
</dbReference>
<dbReference type="GO" id="GO:0005778">
    <property type="term" value="C:peroxisomal membrane"/>
    <property type="evidence" value="ECO:0000314"/>
    <property type="project" value="UniProtKB"/>
</dbReference>
<dbReference type="GO" id="GO:0005777">
    <property type="term" value="C:peroxisome"/>
    <property type="evidence" value="ECO:0000314"/>
    <property type="project" value="MGI"/>
</dbReference>
<dbReference type="GO" id="GO:0005524">
    <property type="term" value="F:ATP binding"/>
    <property type="evidence" value="ECO:0007669"/>
    <property type="project" value="UniProtKB-KW"/>
</dbReference>
<dbReference type="GO" id="GO:0015226">
    <property type="term" value="F:carnitine transmembrane transporter activity"/>
    <property type="evidence" value="ECO:0000314"/>
    <property type="project" value="MGI"/>
</dbReference>
<dbReference type="GO" id="GO:0015879">
    <property type="term" value="P:carnitine transport"/>
    <property type="evidence" value="ECO:0000314"/>
    <property type="project" value="MGI"/>
</dbReference>
<dbReference type="GO" id="GO:0006811">
    <property type="term" value="P:monoatomic ion transport"/>
    <property type="evidence" value="ECO:0007669"/>
    <property type="project" value="UniProtKB-KW"/>
</dbReference>
<dbReference type="FunFam" id="1.20.1250.20:FF:000070">
    <property type="entry name" value="Solute carrier family 22 member 5"/>
    <property type="match status" value="1"/>
</dbReference>
<dbReference type="Gene3D" id="1.20.1250.20">
    <property type="entry name" value="MFS general substrate transporter like domains"/>
    <property type="match status" value="1"/>
</dbReference>
<dbReference type="InterPro" id="IPR020846">
    <property type="entry name" value="MFS_dom"/>
</dbReference>
<dbReference type="InterPro" id="IPR005828">
    <property type="entry name" value="MFS_sugar_transport-like"/>
</dbReference>
<dbReference type="InterPro" id="IPR036259">
    <property type="entry name" value="MFS_trans_sf"/>
</dbReference>
<dbReference type="InterPro" id="IPR004749">
    <property type="entry name" value="Orgcat_transp/SVOP"/>
</dbReference>
<dbReference type="InterPro" id="IPR005829">
    <property type="entry name" value="Sugar_transporter_CS"/>
</dbReference>
<dbReference type="NCBIfam" id="TIGR00898">
    <property type="entry name" value="2A0119"/>
    <property type="match status" value="1"/>
</dbReference>
<dbReference type="PANTHER" id="PTHR24064">
    <property type="entry name" value="SOLUTE CARRIER FAMILY 22 MEMBER"/>
    <property type="match status" value="1"/>
</dbReference>
<dbReference type="Pfam" id="PF00083">
    <property type="entry name" value="Sugar_tr"/>
    <property type="match status" value="1"/>
</dbReference>
<dbReference type="SUPFAM" id="SSF103473">
    <property type="entry name" value="MFS general substrate transporter"/>
    <property type="match status" value="1"/>
</dbReference>
<dbReference type="PROSITE" id="PS50850">
    <property type="entry name" value="MFS"/>
    <property type="match status" value="1"/>
</dbReference>
<dbReference type="PROSITE" id="PS00216">
    <property type="entry name" value="SUGAR_TRANSPORT_1"/>
    <property type="match status" value="1"/>
</dbReference>
<comment type="function">
    <text evidence="3">Sodium-ion independent, medium affinity carnitine transporter. Also transports organic cations such as tetraethylammonium (TEA) without the involvement of sodium. Relative uptake activity ratio of carnitine to TEA is 746.</text>
</comment>
<comment type="subcellular location">
    <subcellularLocation>
        <location evidence="3 4 5">Peroxisome membrane</location>
        <topology evidence="3 4 5">Multi-pass membrane protein</topology>
    </subcellularLocation>
</comment>
<comment type="tissue specificity">
    <text evidence="3">Predominantly expressed in testis.</text>
</comment>
<comment type="similarity">
    <text evidence="6">Belongs to the major facilitator (TC 2.A.1) superfamily. Organic cation transporter (TC 2.A.1.19) family.</text>
</comment>
<feature type="chain" id="PRO_0000220506" description="Solute carrier family 22 member 21">
    <location>
        <begin position="1"/>
        <end position="564"/>
    </location>
</feature>
<feature type="topological domain" description="Cytoplasmic" evidence="1">
    <location>
        <begin position="1"/>
        <end position="20"/>
    </location>
</feature>
<feature type="transmembrane region" description="Helical; Name=1" evidence="1">
    <location>
        <begin position="21"/>
        <end position="41"/>
    </location>
</feature>
<feature type="topological domain" description="Extracellular" evidence="1">
    <location>
        <begin position="42"/>
        <end position="142"/>
    </location>
</feature>
<feature type="transmembrane region" description="Helical; Name=2" evidence="1">
    <location>
        <begin position="143"/>
        <end position="163"/>
    </location>
</feature>
<feature type="topological domain" description="Cytoplasmic" evidence="1">
    <location>
        <begin position="164"/>
        <end position="172"/>
    </location>
</feature>
<feature type="transmembrane region" description="Helical; Name=3" evidence="1">
    <location>
        <begin position="173"/>
        <end position="193"/>
    </location>
</feature>
<feature type="topological domain" description="Extracellular" evidence="1">
    <location>
        <begin position="194"/>
        <end position="197"/>
    </location>
</feature>
<feature type="transmembrane region" description="Helical; Name=4" evidence="1">
    <location>
        <begin position="198"/>
        <end position="218"/>
    </location>
</feature>
<feature type="topological domain" description="Cytoplasmic" evidence="1">
    <location>
        <begin position="219"/>
        <end position="232"/>
    </location>
</feature>
<feature type="transmembrane region" description="Helical; Name=5" evidence="1">
    <location>
        <begin position="233"/>
        <end position="253"/>
    </location>
</feature>
<feature type="topological domain" description="Extracellular" evidence="1">
    <location>
        <begin position="254"/>
        <end position="257"/>
    </location>
</feature>
<feature type="transmembrane region" description="Helical; Name=6" evidence="1">
    <location>
        <begin position="258"/>
        <end position="278"/>
    </location>
</feature>
<feature type="topological domain" description="Cytoplasmic" evidence="1">
    <location>
        <begin position="279"/>
        <end position="344"/>
    </location>
</feature>
<feature type="transmembrane region" description="Helical; Name=7" evidence="1">
    <location>
        <begin position="345"/>
        <end position="365"/>
    </location>
</feature>
<feature type="topological domain" description="Extracellular" evidence="1">
    <location>
        <begin position="366"/>
        <end position="376"/>
    </location>
</feature>
<feature type="transmembrane region" description="Helical; Name=8" evidence="1">
    <location>
        <begin position="377"/>
        <end position="397"/>
    </location>
</feature>
<feature type="topological domain" description="Cytoplasmic" evidence="1">
    <location>
        <begin position="398"/>
        <end position="409"/>
    </location>
</feature>
<feature type="transmembrane region" description="Helical; Name=9" evidence="1">
    <location>
        <begin position="410"/>
        <end position="430"/>
    </location>
</feature>
<feature type="topological domain" description="Extracellular" evidence="1">
    <location>
        <begin position="431"/>
        <end position="433"/>
    </location>
</feature>
<feature type="transmembrane region" description="Helical; Name=10" evidence="1">
    <location>
        <begin position="434"/>
        <end position="454"/>
    </location>
</feature>
<feature type="topological domain" description="Cytoplasmic" evidence="1">
    <location>
        <begin position="455"/>
        <end position="465"/>
    </location>
</feature>
<feature type="transmembrane region" description="Helical; Name=11" evidence="1">
    <location>
        <begin position="466"/>
        <end position="486"/>
    </location>
</feature>
<feature type="topological domain" description="Extracellular" evidence="1">
    <location>
        <begin position="487"/>
        <end position="491"/>
    </location>
</feature>
<feature type="transmembrane region" description="Helical; Name=12" evidence="1">
    <location>
        <begin position="492"/>
        <end position="512"/>
    </location>
</feature>
<feature type="topological domain" description="Cytoplasmic" evidence="1">
    <location>
        <begin position="513"/>
        <end position="564"/>
    </location>
</feature>
<feature type="region of interest" description="Disordered" evidence="2">
    <location>
        <begin position="532"/>
        <end position="564"/>
    </location>
</feature>
<feature type="binding site" evidence="1">
    <location>
        <begin position="218"/>
        <end position="225"/>
    </location>
    <ligand>
        <name>ATP</name>
        <dbReference type="ChEBI" id="CHEBI:30616"/>
    </ligand>
</feature>
<feature type="glycosylation site" description="N-linked (GlcNAc...) asparagine" evidence="1">
    <location>
        <position position="57"/>
    </location>
</feature>
<feature type="glycosylation site" description="N-linked (GlcNAc...) asparagine" evidence="1">
    <location>
        <position position="64"/>
    </location>
</feature>
<feature type="glycosylation site" description="N-linked (GlcNAc...) asparagine" evidence="1">
    <location>
        <position position="91"/>
    </location>
</feature>
<organism>
    <name type="scientific">Mus musculus</name>
    <name type="common">Mouse</name>
    <dbReference type="NCBI Taxonomy" id="10090"/>
    <lineage>
        <taxon>Eukaryota</taxon>
        <taxon>Metazoa</taxon>
        <taxon>Chordata</taxon>
        <taxon>Craniata</taxon>
        <taxon>Vertebrata</taxon>
        <taxon>Euteleostomi</taxon>
        <taxon>Mammalia</taxon>
        <taxon>Eutheria</taxon>
        <taxon>Euarchontoglires</taxon>
        <taxon>Glires</taxon>
        <taxon>Rodentia</taxon>
        <taxon>Myomorpha</taxon>
        <taxon>Muroidea</taxon>
        <taxon>Muridae</taxon>
        <taxon>Murinae</taxon>
        <taxon>Mus</taxon>
        <taxon>Mus</taxon>
    </lineage>
</organism>
<name>S22AL_MOUSE</name>
<proteinExistence type="evidence at transcript level"/>
<accession>Q9WTN6</accession>
<accession>Q5SWV0</accession>
<keyword id="KW-0067">ATP-binding</keyword>
<keyword id="KW-0325">Glycoprotein</keyword>
<keyword id="KW-0406">Ion transport</keyword>
<keyword id="KW-0472">Membrane</keyword>
<keyword id="KW-0547">Nucleotide-binding</keyword>
<keyword id="KW-0576">Peroxisome</keyword>
<keyword id="KW-1185">Reference proteome</keyword>
<keyword id="KW-0812">Transmembrane</keyword>
<keyword id="KW-1133">Transmembrane helix</keyword>
<keyword id="KW-0813">Transport</keyword>
<reference key="1">
    <citation type="journal article" date="2000" name="J. Biol. Chem.">
        <title>Molecular and functional characterization of organic cation/carnitine transporter family in mice.</title>
        <authorList>
            <person name="Tamai I."/>
            <person name="Ohashi R."/>
            <person name="Nezu J."/>
            <person name="Sai Y."/>
            <person name="Kobayashi D."/>
            <person name="Oku A."/>
            <person name="Shimane M."/>
            <person name="Tsuji A."/>
        </authorList>
    </citation>
    <scope>NUCLEOTIDE SEQUENCE [MRNA]</scope>
    <scope>FUNCTION</scope>
    <scope>SUBCELLULAR LOCATION</scope>
    <scope>TISSUE SPECIFICITY</scope>
    <source>
        <tissue>Testis</tissue>
    </source>
</reference>
<reference key="2">
    <citation type="journal article" date="2005" name="Science">
        <title>The transcriptional landscape of the mammalian genome.</title>
        <authorList>
            <person name="Carninci P."/>
            <person name="Kasukawa T."/>
            <person name="Katayama S."/>
            <person name="Gough J."/>
            <person name="Frith M.C."/>
            <person name="Maeda N."/>
            <person name="Oyama R."/>
            <person name="Ravasi T."/>
            <person name="Lenhard B."/>
            <person name="Wells C."/>
            <person name="Kodzius R."/>
            <person name="Shimokawa K."/>
            <person name="Bajic V.B."/>
            <person name="Brenner S.E."/>
            <person name="Batalov S."/>
            <person name="Forrest A.R."/>
            <person name="Zavolan M."/>
            <person name="Davis M.J."/>
            <person name="Wilming L.G."/>
            <person name="Aidinis V."/>
            <person name="Allen J.E."/>
            <person name="Ambesi-Impiombato A."/>
            <person name="Apweiler R."/>
            <person name="Aturaliya R.N."/>
            <person name="Bailey T.L."/>
            <person name="Bansal M."/>
            <person name="Baxter L."/>
            <person name="Beisel K.W."/>
            <person name="Bersano T."/>
            <person name="Bono H."/>
            <person name="Chalk A.M."/>
            <person name="Chiu K.P."/>
            <person name="Choudhary V."/>
            <person name="Christoffels A."/>
            <person name="Clutterbuck D.R."/>
            <person name="Crowe M.L."/>
            <person name="Dalla E."/>
            <person name="Dalrymple B.P."/>
            <person name="de Bono B."/>
            <person name="Della Gatta G."/>
            <person name="di Bernardo D."/>
            <person name="Down T."/>
            <person name="Engstrom P."/>
            <person name="Fagiolini M."/>
            <person name="Faulkner G."/>
            <person name="Fletcher C.F."/>
            <person name="Fukushima T."/>
            <person name="Furuno M."/>
            <person name="Futaki S."/>
            <person name="Gariboldi M."/>
            <person name="Georgii-Hemming P."/>
            <person name="Gingeras T.R."/>
            <person name="Gojobori T."/>
            <person name="Green R.E."/>
            <person name="Gustincich S."/>
            <person name="Harbers M."/>
            <person name="Hayashi Y."/>
            <person name="Hensch T.K."/>
            <person name="Hirokawa N."/>
            <person name="Hill D."/>
            <person name="Huminiecki L."/>
            <person name="Iacono M."/>
            <person name="Ikeo K."/>
            <person name="Iwama A."/>
            <person name="Ishikawa T."/>
            <person name="Jakt M."/>
            <person name="Kanapin A."/>
            <person name="Katoh M."/>
            <person name="Kawasawa Y."/>
            <person name="Kelso J."/>
            <person name="Kitamura H."/>
            <person name="Kitano H."/>
            <person name="Kollias G."/>
            <person name="Krishnan S.P."/>
            <person name="Kruger A."/>
            <person name="Kummerfeld S.K."/>
            <person name="Kurochkin I.V."/>
            <person name="Lareau L.F."/>
            <person name="Lazarevic D."/>
            <person name="Lipovich L."/>
            <person name="Liu J."/>
            <person name="Liuni S."/>
            <person name="McWilliam S."/>
            <person name="Madan Babu M."/>
            <person name="Madera M."/>
            <person name="Marchionni L."/>
            <person name="Matsuda H."/>
            <person name="Matsuzawa S."/>
            <person name="Miki H."/>
            <person name="Mignone F."/>
            <person name="Miyake S."/>
            <person name="Morris K."/>
            <person name="Mottagui-Tabar S."/>
            <person name="Mulder N."/>
            <person name="Nakano N."/>
            <person name="Nakauchi H."/>
            <person name="Ng P."/>
            <person name="Nilsson R."/>
            <person name="Nishiguchi S."/>
            <person name="Nishikawa S."/>
            <person name="Nori F."/>
            <person name="Ohara O."/>
            <person name="Okazaki Y."/>
            <person name="Orlando V."/>
            <person name="Pang K.C."/>
            <person name="Pavan W.J."/>
            <person name="Pavesi G."/>
            <person name="Pesole G."/>
            <person name="Petrovsky N."/>
            <person name="Piazza S."/>
            <person name="Reed J."/>
            <person name="Reid J.F."/>
            <person name="Ring B.Z."/>
            <person name="Ringwald M."/>
            <person name="Rost B."/>
            <person name="Ruan Y."/>
            <person name="Salzberg S.L."/>
            <person name="Sandelin A."/>
            <person name="Schneider C."/>
            <person name="Schoenbach C."/>
            <person name="Sekiguchi K."/>
            <person name="Semple C.A."/>
            <person name="Seno S."/>
            <person name="Sessa L."/>
            <person name="Sheng Y."/>
            <person name="Shibata Y."/>
            <person name="Shimada H."/>
            <person name="Shimada K."/>
            <person name="Silva D."/>
            <person name="Sinclair B."/>
            <person name="Sperling S."/>
            <person name="Stupka E."/>
            <person name="Sugiura K."/>
            <person name="Sultana R."/>
            <person name="Takenaka Y."/>
            <person name="Taki K."/>
            <person name="Tammoja K."/>
            <person name="Tan S.L."/>
            <person name="Tang S."/>
            <person name="Taylor M.S."/>
            <person name="Tegner J."/>
            <person name="Teichmann S.A."/>
            <person name="Ueda H.R."/>
            <person name="van Nimwegen E."/>
            <person name="Verardo R."/>
            <person name="Wei C.L."/>
            <person name="Yagi K."/>
            <person name="Yamanishi H."/>
            <person name="Zabarovsky E."/>
            <person name="Zhu S."/>
            <person name="Zimmer A."/>
            <person name="Hide W."/>
            <person name="Bult C."/>
            <person name="Grimmond S.M."/>
            <person name="Teasdale R.D."/>
            <person name="Liu E.T."/>
            <person name="Brusic V."/>
            <person name="Quackenbush J."/>
            <person name="Wahlestedt C."/>
            <person name="Mattick J.S."/>
            <person name="Hume D.A."/>
            <person name="Kai C."/>
            <person name="Sasaki D."/>
            <person name="Tomaru Y."/>
            <person name="Fukuda S."/>
            <person name="Kanamori-Katayama M."/>
            <person name="Suzuki M."/>
            <person name="Aoki J."/>
            <person name="Arakawa T."/>
            <person name="Iida J."/>
            <person name="Imamura K."/>
            <person name="Itoh M."/>
            <person name="Kato T."/>
            <person name="Kawaji H."/>
            <person name="Kawagashira N."/>
            <person name="Kawashima T."/>
            <person name="Kojima M."/>
            <person name="Kondo S."/>
            <person name="Konno H."/>
            <person name="Nakano K."/>
            <person name="Ninomiya N."/>
            <person name="Nishio T."/>
            <person name="Okada M."/>
            <person name="Plessy C."/>
            <person name="Shibata K."/>
            <person name="Shiraki T."/>
            <person name="Suzuki S."/>
            <person name="Tagami M."/>
            <person name="Waki K."/>
            <person name="Watahiki A."/>
            <person name="Okamura-Oho Y."/>
            <person name="Suzuki H."/>
            <person name="Kawai J."/>
            <person name="Hayashizaki Y."/>
        </authorList>
    </citation>
    <scope>NUCLEOTIDE SEQUENCE [LARGE SCALE MRNA]</scope>
    <source>
        <strain>C57BL/6J</strain>
        <tissue>Testis</tissue>
    </source>
</reference>
<reference key="3">
    <citation type="journal article" date="2009" name="PLoS Biol.">
        <title>Lineage-specific biology revealed by a finished genome assembly of the mouse.</title>
        <authorList>
            <person name="Church D.M."/>
            <person name="Goodstadt L."/>
            <person name="Hillier L.W."/>
            <person name="Zody M.C."/>
            <person name="Goldstein S."/>
            <person name="She X."/>
            <person name="Bult C.J."/>
            <person name="Agarwala R."/>
            <person name="Cherry J.L."/>
            <person name="DiCuccio M."/>
            <person name="Hlavina W."/>
            <person name="Kapustin Y."/>
            <person name="Meric P."/>
            <person name="Maglott D."/>
            <person name="Birtle Z."/>
            <person name="Marques A.C."/>
            <person name="Graves T."/>
            <person name="Zhou S."/>
            <person name="Teague B."/>
            <person name="Potamousis K."/>
            <person name="Churas C."/>
            <person name="Place M."/>
            <person name="Herschleb J."/>
            <person name="Runnheim R."/>
            <person name="Forrest D."/>
            <person name="Amos-Landgraf J."/>
            <person name="Schwartz D.C."/>
            <person name="Cheng Z."/>
            <person name="Lindblad-Toh K."/>
            <person name="Eichler E.E."/>
            <person name="Ponting C.P."/>
        </authorList>
    </citation>
    <scope>NUCLEOTIDE SEQUENCE [LARGE SCALE GENOMIC DNA]</scope>
    <source>
        <strain>C57BL/6J</strain>
    </source>
</reference>
<reference key="4">
    <citation type="journal article" date="2003" name="Biochem. Biophys. Res. Commun.">
        <title>A third human carnitine/organic cation transporter (OCTN3) as a candidate for the 5q31 Crohn's disease locus (IBD5).</title>
        <authorList>
            <person name="Lamhonwah A.-M."/>
            <person name="Skaug J."/>
            <person name="Scherer S.W."/>
            <person name="Tein I."/>
        </authorList>
    </citation>
    <scope>SUBCELLULAR LOCATION</scope>
</reference>
<reference key="5">
    <citation type="journal article" date="2005" name="Biochem. Biophys. Res. Commun.">
        <title>OCTN3 is a mammalian peroxisomal membrane carnitine transporter.</title>
        <authorList>
            <person name="Lamhonwah A.-M."/>
            <person name="Ackerley C.A."/>
            <person name="Tilups A."/>
            <person name="Edwards V.D."/>
            <person name="Wanders R.J."/>
            <person name="Tein I."/>
        </authorList>
    </citation>
    <scope>SUBCELLULAR LOCATION</scope>
</reference>
<evidence type="ECO:0000255" key="1"/>
<evidence type="ECO:0000256" key="2">
    <source>
        <dbReference type="SAM" id="MobiDB-lite"/>
    </source>
</evidence>
<evidence type="ECO:0000269" key="3">
    <source>
    </source>
</evidence>
<evidence type="ECO:0000269" key="4">
    <source>
    </source>
</evidence>
<evidence type="ECO:0000269" key="5">
    <source>
    </source>
</evidence>
<evidence type="ECO:0000305" key="6"/>
<protein>
    <recommendedName>
        <fullName>Solute carrier family 22 member 21</fullName>
    </recommendedName>
    <alternativeName>
        <fullName>Organic cation/carnitine transporter 3</fullName>
    </alternativeName>
    <alternativeName>
        <fullName>Solute carrier family 22 member 9</fullName>
    </alternativeName>
</protein>
<sequence>MLDYDEVTAFLGEWGTFQRLIFFLLSASIIPNGFTGLSAVFLTAIPEHRCRIPDTVNLSSAWRNHSIPMETKDGPEVPQKCRRYRLATIANFSELGLEPGRDVDLEQLEQENCLDGWEYDKDIFLSTIVTEWDLVCKDDWKAPLTTSFFYVGVLLGSFISGQLSDRFGRKNILFLTMAMHTGFSFIQVFSVNFEMFTLLYTLVGMGHISNYVAAFVLGTEMLSKSVRIIFATLGVCIFFAFGFMVLPLFAYFIREWRRLLLAITLPGVLCGALWWFIPESPRWLISQGRIKEAEVIIRKAAKINGIVAPSTIFDPSETNKLQDDSSKKPQSHHIYDLVRTPNIRILTIMSIILWLTISVGYFGLSLDTPNLNGNIYVNCFLLAAVEVPAYVLAWLLLQHVSRRYSMAGSLFLGGSVLLLVQLVPSDLHYLSTTLVMVGKFGITSAYSMVYVYTAELYPTVVRNMGVGVSSTASRLGSILSPYFVYLGAYDRRLPYILMGSLTILTAIITLFFPESSGVSLPETIDEMQKVKKLKQRQSLSKKGSPKESKGNVSRTSRTSEPKGF</sequence>